<feature type="chain" id="PRO_0000268011" description="Ubiquitin carboxyl-terminal hydrolase 7">
    <location>
        <begin position="1"/>
        <end position="1129"/>
    </location>
</feature>
<feature type="domain" description="MATH" evidence="2">
    <location>
        <begin position="101"/>
        <end position="222"/>
    </location>
</feature>
<feature type="domain" description="USP">
    <location>
        <begin position="241"/>
        <end position="548"/>
    </location>
</feature>
<feature type="region of interest" description="Disordered" evidence="5">
    <location>
        <begin position="1"/>
        <end position="20"/>
    </location>
</feature>
<feature type="active site" description="Nucleophile" evidence="3 4">
    <location>
        <position position="250"/>
    </location>
</feature>
<feature type="active site" description="Proton acceptor" evidence="3 4">
    <location>
        <position position="490"/>
    </location>
</feature>
<feature type="modified residue" description="Phosphoserine" evidence="6">
    <location>
        <position position="1117"/>
    </location>
</feature>
<accession>Q9VYQ8</accession>
<accession>B5RJQ7</accession>
<evidence type="ECO:0000250" key="1">
    <source>
        <dbReference type="UniProtKB" id="Q93009"/>
    </source>
</evidence>
<evidence type="ECO:0000255" key="2">
    <source>
        <dbReference type="PROSITE-ProRule" id="PRU00129"/>
    </source>
</evidence>
<evidence type="ECO:0000255" key="3">
    <source>
        <dbReference type="PROSITE-ProRule" id="PRU10092"/>
    </source>
</evidence>
<evidence type="ECO:0000255" key="4">
    <source>
        <dbReference type="PROSITE-ProRule" id="PRU10093"/>
    </source>
</evidence>
<evidence type="ECO:0000256" key="5">
    <source>
        <dbReference type="SAM" id="MobiDB-lite"/>
    </source>
</evidence>
<evidence type="ECO:0000269" key="6">
    <source>
    </source>
</evidence>
<evidence type="ECO:0000305" key="7"/>
<name>UBP7_DROME</name>
<comment type="function">
    <text evidence="1">Hydrolase that deubiquitinates target proteins.</text>
</comment>
<comment type="catalytic activity">
    <reaction evidence="1">
        <text>Thiol-dependent hydrolysis of ester, thioester, amide, peptide and isopeptide bonds formed by the C-terminal Gly of ubiquitin (a 76-residue protein attached to proteins as an intracellular targeting signal).</text>
        <dbReference type="EC" id="3.4.19.12"/>
    </reaction>
</comment>
<comment type="subcellular location">
    <subcellularLocation>
        <location evidence="1">Nucleus</location>
    </subcellularLocation>
</comment>
<comment type="similarity">
    <text evidence="7">Belongs to the peptidase C19 family.</text>
</comment>
<keyword id="KW-0378">Hydrolase</keyword>
<keyword id="KW-0539">Nucleus</keyword>
<keyword id="KW-0597">Phosphoprotein</keyword>
<keyword id="KW-0645">Protease</keyword>
<keyword id="KW-1185">Reference proteome</keyword>
<keyword id="KW-0788">Thiol protease</keyword>
<keyword id="KW-0833">Ubl conjugation pathway</keyword>
<protein>
    <recommendedName>
        <fullName>Ubiquitin carboxyl-terminal hydrolase 7</fullName>
        <ecNumber evidence="1">3.4.19.12</ecNumber>
    </recommendedName>
    <alternativeName>
        <fullName>Ubiquitin thioesterase 7</fullName>
    </alternativeName>
    <alternativeName>
        <fullName>Ubiquitin-specific-processing protease 7</fullName>
        <shortName>Deubiquitinating enzyme 7</shortName>
    </alternativeName>
</protein>
<dbReference type="EC" id="3.4.19.12" evidence="1"/>
<dbReference type="EMBL" id="AE014298">
    <property type="protein sequence ID" value="AAF48134.1"/>
    <property type="molecule type" value="Genomic_DNA"/>
</dbReference>
<dbReference type="EMBL" id="BT044531">
    <property type="protein sequence ID" value="ACH95305.1"/>
    <property type="molecule type" value="mRNA"/>
</dbReference>
<dbReference type="RefSeq" id="NP_572779.2">
    <property type="nucleotide sequence ID" value="NM_132551.3"/>
</dbReference>
<dbReference type="SMR" id="Q9VYQ8"/>
<dbReference type="BioGRID" id="58574">
    <property type="interactions" value="20"/>
</dbReference>
<dbReference type="FunCoup" id="Q9VYQ8">
    <property type="interactions" value="2753"/>
</dbReference>
<dbReference type="IntAct" id="Q9VYQ8">
    <property type="interactions" value="7"/>
</dbReference>
<dbReference type="STRING" id="7227.FBpp0073474"/>
<dbReference type="MEROPS" id="C19.A52"/>
<dbReference type="iPTMnet" id="Q9VYQ8"/>
<dbReference type="PaxDb" id="7227-FBpp0073474"/>
<dbReference type="EnsemblMetazoa" id="FBtr0073641">
    <property type="protein sequence ID" value="FBpp0073474"/>
    <property type="gene ID" value="FBgn0030366"/>
</dbReference>
<dbReference type="GeneID" id="32169"/>
<dbReference type="KEGG" id="dme:Dmel_CG1490"/>
<dbReference type="AGR" id="FB:FBgn0030366"/>
<dbReference type="CTD" id="7874"/>
<dbReference type="FlyBase" id="FBgn0030366">
    <property type="gene designation" value="Usp7"/>
</dbReference>
<dbReference type="VEuPathDB" id="VectorBase:FBgn0030366"/>
<dbReference type="eggNOG" id="KOG1863">
    <property type="taxonomic scope" value="Eukaryota"/>
</dbReference>
<dbReference type="GeneTree" id="ENSGT00940000156053"/>
<dbReference type="InParanoid" id="Q9VYQ8"/>
<dbReference type="OMA" id="HTAHHRF"/>
<dbReference type="OrthoDB" id="289038at2759"/>
<dbReference type="PhylomeDB" id="Q9VYQ8"/>
<dbReference type="Reactome" id="R-DME-5689880">
    <property type="pathway name" value="Ub-specific processing proteases"/>
</dbReference>
<dbReference type="Reactome" id="R-DME-6781823">
    <property type="pathway name" value="Formation of TC-NER Pre-Incision Complex"/>
</dbReference>
<dbReference type="Reactome" id="R-DME-6782135">
    <property type="pathway name" value="Dual incision in TC-NER"/>
</dbReference>
<dbReference type="Reactome" id="R-DME-6782210">
    <property type="pathway name" value="Gap-filling DNA repair synthesis and ligation in TC-NER"/>
</dbReference>
<dbReference type="Reactome" id="R-DME-6804757">
    <property type="pathway name" value="Regulation of TP53 Degradation"/>
</dbReference>
<dbReference type="Reactome" id="R-DME-8866652">
    <property type="pathway name" value="Synthesis of active ubiquitin: roles of E1 and E2 enzymes"/>
</dbReference>
<dbReference type="Reactome" id="R-DME-8948747">
    <property type="pathway name" value="Regulation of PTEN localization"/>
</dbReference>
<dbReference type="SignaLink" id="Q9VYQ8"/>
<dbReference type="BioGRID-ORCS" id="32169">
    <property type="hits" value="1 hit in 1 CRISPR screen"/>
</dbReference>
<dbReference type="ChiTaRS" id="Usp7">
    <property type="organism name" value="fly"/>
</dbReference>
<dbReference type="GenomeRNAi" id="32169"/>
<dbReference type="PRO" id="PR:Q9VYQ8"/>
<dbReference type="Proteomes" id="UP000000803">
    <property type="component" value="Chromosome X"/>
</dbReference>
<dbReference type="Bgee" id="FBgn0030366">
    <property type="expression patterns" value="Expressed in hemocyte (sensu Nematoda and Protostomia) in insect leg and 277 other cell types or tissues"/>
</dbReference>
<dbReference type="ExpressionAtlas" id="Q9VYQ8">
    <property type="expression patterns" value="baseline and differential"/>
</dbReference>
<dbReference type="GO" id="GO:0005829">
    <property type="term" value="C:cytosol"/>
    <property type="evidence" value="ECO:0000314"/>
    <property type="project" value="FlyBase"/>
</dbReference>
<dbReference type="GO" id="GO:0000792">
    <property type="term" value="C:heterochromatin"/>
    <property type="evidence" value="ECO:0000314"/>
    <property type="project" value="FlyBase"/>
</dbReference>
<dbReference type="GO" id="GO:0005634">
    <property type="term" value="C:nucleus"/>
    <property type="evidence" value="ECO:0000314"/>
    <property type="project" value="FlyBase"/>
</dbReference>
<dbReference type="GO" id="GO:0005700">
    <property type="term" value="C:polytene chromosome"/>
    <property type="evidence" value="ECO:0000314"/>
    <property type="project" value="FlyBase"/>
</dbReference>
<dbReference type="GO" id="GO:0032991">
    <property type="term" value="C:protein-containing complex"/>
    <property type="evidence" value="ECO:0000353"/>
    <property type="project" value="FlyBase"/>
</dbReference>
<dbReference type="GO" id="GO:0004843">
    <property type="term" value="F:cysteine-type deubiquitinase activity"/>
    <property type="evidence" value="ECO:0000314"/>
    <property type="project" value="FlyBase"/>
</dbReference>
<dbReference type="GO" id="GO:0035331">
    <property type="term" value="P:negative regulation of hippo signaling"/>
    <property type="evidence" value="ECO:0000316"/>
    <property type="project" value="FlyBase"/>
</dbReference>
<dbReference type="GO" id="GO:0031453">
    <property type="term" value="P:positive regulation of heterochromatin formation"/>
    <property type="evidence" value="ECO:0000316"/>
    <property type="project" value="FlyBase"/>
</dbReference>
<dbReference type="GO" id="GO:0045880">
    <property type="term" value="P:positive regulation of smoothened signaling pathway"/>
    <property type="evidence" value="ECO:0000315"/>
    <property type="project" value="FlyBase"/>
</dbReference>
<dbReference type="GO" id="GO:0016579">
    <property type="term" value="P:protein deubiquitination"/>
    <property type="evidence" value="ECO:0000250"/>
    <property type="project" value="UniProtKB"/>
</dbReference>
<dbReference type="GO" id="GO:0006508">
    <property type="term" value="P:proteolysis"/>
    <property type="evidence" value="ECO:0007669"/>
    <property type="project" value="UniProtKB-KW"/>
</dbReference>
<dbReference type="GO" id="GO:0031647">
    <property type="term" value="P:regulation of protein stability"/>
    <property type="evidence" value="ECO:0000318"/>
    <property type="project" value="GO_Central"/>
</dbReference>
<dbReference type="CDD" id="cd03772">
    <property type="entry name" value="MATH_HAUSP"/>
    <property type="match status" value="1"/>
</dbReference>
<dbReference type="CDD" id="cd02659">
    <property type="entry name" value="peptidase_C19C"/>
    <property type="match status" value="1"/>
</dbReference>
<dbReference type="FunFam" id="2.60.210.10:FF:000014">
    <property type="entry name" value="Ubiquitin carboxyl-terminal hydrolase 7"/>
    <property type="match status" value="1"/>
</dbReference>
<dbReference type="FunFam" id="3.90.70.10:FF:000005">
    <property type="entry name" value="Ubiquitin carboxyl-terminal hydrolase 7"/>
    <property type="match status" value="1"/>
</dbReference>
<dbReference type="FunFam" id="3.10.20.90:FF:000316">
    <property type="entry name" value="ubiquitin carboxyl-terminal hydrolase 7"/>
    <property type="match status" value="1"/>
</dbReference>
<dbReference type="Gene3D" id="2.60.210.10">
    <property type="entry name" value="Apoptosis, Tumor Necrosis Factor Receptor Associated Protein 2, Chain A"/>
    <property type="match status" value="1"/>
</dbReference>
<dbReference type="Gene3D" id="3.90.70.10">
    <property type="entry name" value="Cysteine proteinases"/>
    <property type="match status" value="1"/>
</dbReference>
<dbReference type="Gene3D" id="3.10.20.90">
    <property type="entry name" value="Phosphatidylinositol 3-kinase Catalytic Subunit, Chain A, domain 1"/>
    <property type="match status" value="2"/>
</dbReference>
<dbReference type="InterPro" id="IPR002083">
    <property type="entry name" value="MATH/TRAF_dom"/>
</dbReference>
<dbReference type="InterPro" id="IPR038765">
    <property type="entry name" value="Papain-like_cys_pep_sf"/>
</dbReference>
<dbReference type="InterPro" id="IPR050164">
    <property type="entry name" value="Peptidase_C19"/>
</dbReference>
<dbReference type="InterPro" id="IPR001394">
    <property type="entry name" value="Peptidase_C19_UCH"/>
</dbReference>
<dbReference type="InterPro" id="IPR008974">
    <property type="entry name" value="TRAF-like"/>
</dbReference>
<dbReference type="InterPro" id="IPR024729">
    <property type="entry name" value="USP7_ICP0-binding_dom"/>
</dbReference>
<dbReference type="InterPro" id="IPR029346">
    <property type="entry name" value="USP_C"/>
</dbReference>
<dbReference type="InterPro" id="IPR018200">
    <property type="entry name" value="USP_CS"/>
</dbReference>
<dbReference type="InterPro" id="IPR028889">
    <property type="entry name" value="USP_dom"/>
</dbReference>
<dbReference type="PANTHER" id="PTHR24006">
    <property type="entry name" value="UBIQUITIN CARBOXYL-TERMINAL HYDROLASE"/>
    <property type="match status" value="1"/>
</dbReference>
<dbReference type="PANTHER" id="PTHR24006:SF644">
    <property type="entry name" value="UBIQUITIN CARBOXYL-TERMINAL HYDROLASE 7"/>
    <property type="match status" value="1"/>
</dbReference>
<dbReference type="Pfam" id="PF22486">
    <property type="entry name" value="MATH_2"/>
    <property type="match status" value="1"/>
</dbReference>
<dbReference type="Pfam" id="PF00443">
    <property type="entry name" value="UCH"/>
    <property type="match status" value="1"/>
</dbReference>
<dbReference type="Pfam" id="PF14533">
    <property type="entry name" value="USP7_C2"/>
    <property type="match status" value="1"/>
</dbReference>
<dbReference type="Pfam" id="PF12436">
    <property type="entry name" value="USP7_ICP0_bdg"/>
    <property type="match status" value="1"/>
</dbReference>
<dbReference type="SMART" id="SM00061">
    <property type="entry name" value="MATH"/>
    <property type="match status" value="1"/>
</dbReference>
<dbReference type="SUPFAM" id="SSF54001">
    <property type="entry name" value="Cysteine proteinases"/>
    <property type="match status" value="1"/>
</dbReference>
<dbReference type="SUPFAM" id="SSF49599">
    <property type="entry name" value="TRAF domain-like"/>
    <property type="match status" value="1"/>
</dbReference>
<dbReference type="PROSITE" id="PS50144">
    <property type="entry name" value="MATH"/>
    <property type="match status" value="1"/>
</dbReference>
<dbReference type="PROSITE" id="PS00972">
    <property type="entry name" value="USP_1"/>
    <property type="match status" value="1"/>
</dbReference>
<dbReference type="PROSITE" id="PS00973">
    <property type="entry name" value="USP_2"/>
    <property type="match status" value="1"/>
</dbReference>
<dbReference type="PROSITE" id="PS50235">
    <property type="entry name" value="USP_3"/>
    <property type="match status" value="1"/>
</dbReference>
<organism>
    <name type="scientific">Drosophila melanogaster</name>
    <name type="common">Fruit fly</name>
    <dbReference type="NCBI Taxonomy" id="7227"/>
    <lineage>
        <taxon>Eukaryota</taxon>
        <taxon>Metazoa</taxon>
        <taxon>Ecdysozoa</taxon>
        <taxon>Arthropoda</taxon>
        <taxon>Hexapoda</taxon>
        <taxon>Insecta</taxon>
        <taxon>Pterygota</taxon>
        <taxon>Neoptera</taxon>
        <taxon>Endopterygota</taxon>
        <taxon>Diptera</taxon>
        <taxon>Brachycera</taxon>
        <taxon>Muscomorpha</taxon>
        <taxon>Ephydroidea</taxon>
        <taxon>Drosophilidae</taxon>
        <taxon>Drosophila</taxon>
        <taxon>Sophophora</taxon>
    </lineage>
</organism>
<proteinExistence type="evidence at protein level"/>
<sequence length="1129" mass="130446">MEIETDQSIEAMDTQDTQEVEILTSDLQQTQQQRNSPPQLPKFKNLIQPQLHAVGAVTQLPSENGNMPPQQLLADSSSTSFGDGEAMGIDDESKEDQFRSETTFSFTVENVVQLKSQRLSPPVYVRMLPWRIMVIPNDRALGFFLQCNGENDSPTWSCNAIAELRLKCHKPDAQPFTRARIKHLFYSKENDYGYSNFITWQELKDSEKSYVHNNSITLEVHVVADAPHGVLWDSKKHTGYVGLKNQGATCYMNSLLQTLYFTNSLRLSVYRIPTEADDSSKSVGLSLQRVFHELQFGDRPVGTKKLTKSFGWETLDSFMQHDVQEFLRVLLDKLESKMKGTILEGTIPGLFEGKMSSYIKCKNVDYNSTRYETFYDIQLNIKDKKNIYESFQDYVAPETLEGDNKYDAGVHGLQEASKGVIFTSFPPVLHLHLMRFQYDPVTDSSIKYNDRFEFYEHINLDRYLAESENTLADYVLHAVLVHSGDNHGGHYVVFINPKADGRWFKFDDDVVSSCRKQEAIEQNYGGMDDEISFHAKCSNAYMLVYIRQSELDRVLGDITESEISSDLVERLDLEKRIEMARRKERGEANTYVSVHVILEENFEEQHKRRLFDLEKVHPRVFRIKQNQTVDELVDLFVRGFGVSRQRMRMWNLCTAQTQKFSHFDFVAEGSRTIEQISTSQKPWVIWLQLAWTDVPGPLPPFNPKTESLLFLKYYDPRNKRLNYIGCTQQPHTRRLIDLVPDVNSKLGFEPDTELTIYDEYADKKLVNLNEPIESALFIPQDHLQGHILIFERENVDAKLDLPTVGDYFLDLVYRIEIIFSDKCNPNEPDFTLELSNRYNYDQLANAVAERLNTDPQKLQFFMCINNYKETAGNAVPYTFKGTIKDLVSYTKQSSTKRIFYQRLSLSIHELDNKKQFKCVWVSSDLKDEKELVLYPNKNDTVKGLLEEAAKKISFAENSRRKLRLLKISNHKIVAVCKDDIPLDTLLKSNESITTAQGAQKTFRIEEVPAEDMQLAENEFLIPVAHFSKELYNSFGIPFLTKARQGEPYGALKQRIQRRLNVQDKEWENYKFCVISMGHNADVNDNTPVDLEVYRSWTSGQLPFFGLDHINKSRKRSSLNFSEKAIKIYN</sequence>
<reference key="1">
    <citation type="journal article" date="2000" name="Science">
        <title>The genome sequence of Drosophila melanogaster.</title>
        <authorList>
            <person name="Adams M.D."/>
            <person name="Celniker S.E."/>
            <person name="Holt R.A."/>
            <person name="Evans C.A."/>
            <person name="Gocayne J.D."/>
            <person name="Amanatides P.G."/>
            <person name="Scherer S.E."/>
            <person name="Li P.W."/>
            <person name="Hoskins R.A."/>
            <person name="Galle R.F."/>
            <person name="George R.A."/>
            <person name="Lewis S.E."/>
            <person name="Richards S."/>
            <person name="Ashburner M."/>
            <person name="Henderson S.N."/>
            <person name="Sutton G.G."/>
            <person name="Wortman J.R."/>
            <person name="Yandell M.D."/>
            <person name="Zhang Q."/>
            <person name="Chen L.X."/>
            <person name="Brandon R.C."/>
            <person name="Rogers Y.-H.C."/>
            <person name="Blazej R.G."/>
            <person name="Champe M."/>
            <person name="Pfeiffer B.D."/>
            <person name="Wan K.H."/>
            <person name="Doyle C."/>
            <person name="Baxter E.G."/>
            <person name="Helt G."/>
            <person name="Nelson C.R."/>
            <person name="Miklos G.L.G."/>
            <person name="Abril J.F."/>
            <person name="Agbayani A."/>
            <person name="An H.-J."/>
            <person name="Andrews-Pfannkoch C."/>
            <person name="Baldwin D."/>
            <person name="Ballew R.M."/>
            <person name="Basu A."/>
            <person name="Baxendale J."/>
            <person name="Bayraktaroglu L."/>
            <person name="Beasley E.M."/>
            <person name="Beeson K.Y."/>
            <person name="Benos P.V."/>
            <person name="Berman B.P."/>
            <person name="Bhandari D."/>
            <person name="Bolshakov S."/>
            <person name="Borkova D."/>
            <person name="Botchan M.R."/>
            <person name="Bouck J."/>
            <person name="Brokstein P."/>
            <person name="Brottier P."/>
            <person name="Burtis K.C."/>
            <person name="Busam D.A."/>
            <person name="Butler H."/>
            <person name="Cadieu E."/>
            <person name="Center A."/>
            <person name="Chandra I."/>
            <person name="Cherry J.M."/>
            <person name="Cawley S."/>
            <person name="Dahlke C."/>
            <person name="Davenport L.B."/>
            <person name="Davies P."/>
            <person name="de Pablos B."/>
            <person name="Delcher A."/>
            <person name="Deng Z."/>
            <person name="Mays A.D."/>
            <person name="Dew I."/>
            <person name="Dietz S.M."/>
            <person name="Dodson K."/>
            <person name="Doup L.E."/>
            <person name="Downes M."/>
            <person name="Dugan-Rocha S."/>
            <person name="Dunkov B.C."/>
            <person name="Dunn P."/>
            <person name="Durbin K.J."/>
            <person name="Evangelista C.C."/>
            <person name="Ferraz C."/>
            <person name="Ferriera S."/>
            <person name="Fleischmann W."/>
            <person name="Fosler C."/>
            <person name="Gabrielian A.E."/>
            <person name="Garg N.S."/>
            <person name="Gelbart W.M."/>
            <person name="Glasser K."/>
            <person name="Glodek A."/>
            <person name="Gong F."/>
            <person name="Gorrell J.H."/>
            <person name="Gu Z."/>
            <person name="Guan P."/>
            <person name="Harris M."/>
            <person name="Harris N.L."/>
            <person name="Harvey D.A."/>
            <person name="Heiman T.J."/>
            <person name="Hernandez J.R."/>
            <person name="Houck J."/>
            <person name="Hostin D."/>
            <person name="Houston K.A."/>
            <person name="Howland T.J."/>
            <person name="Wei M.-H."/>
            <person name="Ibegwam C."/>
            <person name="Jalali M."/>
            <person name="Kalush F."/>
            <person name="Karpen G.H."/>
            <person name="Ke Z."/>
            <person name="Kennison J.A."/>
            <person name="Ketchum K.A."/>
            <person name="Kimmel B.E."/>
            <person name="Kodira C.D."/>
            <person name="Kraft C.L."/>
            <person name="Kravitz S."/>
            <person name="Kulp D."/>
            <person name="Lai Z."/>
            <person name="Lasko P."/>
            <person name="Lei Y."/>
            <person name="Levitsky A.A."/>
            <person name="Li J.H."/>
            <person name="Li Z."/>
            <person name="Liang Y."/>
            <person name="Lin X."/>
            <person name="Liu X."/>
            <person name="Mattei B."/>
            <person name="McIntosh T.C."/>
            <person name="McLeod M.P."/>
            <person name="McPherson D."/>
            <person name="Merkulov G."/>
            <person name="Milshina N.V."/>
            <person name="Mobarry C."/>
            <person name="Morris J."/>
            <person name="Moshrefi A."/>
            <person name="Mount S.M."/>
            <person name="Moy M."/>
            <person name="Murphy B."/>
            <person name="Murphy L."/>
            <person name="Muzny D.M."/>
            <person name="Nelson D.L."/>
            <person name="Nelson D.R."/>
            <person name="Nelson K.A."/>
            <person name="Nixon K."/>
            <person name="Nusskern D.R."/>
            <person name="Pacleb J.M."/>
            <person name="Palazzolo M."/>
            <person name="Pittman G.S."/>
            <person name="Pan S."/>
            <person name="Pollard J."/>
            <person name="Puri V."/>
            <person name="Reese M.G."/>
            <person name="Reinert K."/>
            <person name="Remington K."/>
            <person name="Saunders R.D.C."/>
            <person name="Scheeler F."/>
            <person name="Shen H."/>
            <person name="Shue B.C."/>
            <person name="Siden-Kiamos I."/>
            <person name="Simpson M."/>
            <person name="Skupski M.P."/>
            <person name="Smith T.J."/>
            <person name="Spier E."/>
            <person name="Spradling A.C."/>
            <person name="Stapleton M."/>
            <person name="Strong R."/>
            <person name="Sun E."/>
            <person name="Svirskas R."/>
            <person name="Tector C."/>
            <person name="Turner R."/>
            <person name="Venter E."/>
            <person name="Wang A.H."/>
            <person name="Wang X."/>
            <person name="Wang Z.-Y."/>
            <person name="Wassarman D.A."/>
            <person name="Weinstock G.M."/>
            <person name="Weissenbach J."/>
            <person name="Williams S.M."/>
            <person name="Woodage T."/>
            <person name="Worley K.C."/>
            <person name="Wu D."/>
            <person name="Yang S."/>
            <person name="Yao Q.A."/>
            <person name="Ye J."/>
            <person name="Yeh R.-F."/>
            <person name="Zaveri J.S."/>
            <person name="Zhan M."/>
            <person name="Zhang G."/>
            <person name="Zhao Q."/>
            <person name="Zheng L."/>
            <person name="Zheng X.H."/>
            <person name="Zhong F.N."/>
            <person name="Zhong W."/>
            <person name="Zhou X."/>
            <person name="Zhu S.C."/>
            <person name="Zhu X."/>
            <person name="Smith H.O."/>
            <person name="Gibbs R.A."/>
            <person name="Myers E.W."/>
            <person name="Rubin G.M."/>
            <person name="Venter J.C."/>
        </authorList>
    </citation>
    <scope>NUCLEOTIDE SEQUENCE [LARGE SCALE GENOMIC DNA]</scope>
    <source>
        <strain>Berkeley</strain>
    </source>
</reference>
<reference key="2">
    <citation type="journal article" date="2002" name="Genome Biol.">
        <title>Annotation of the Drosophila melanogaster euchromatic genome: a systematic review.</title>
        <authorList>
            <person name="Misra S."/>
            <person name="Crosby M.A."/>
            <person name="Mungall C.J."/>
            <person name="Matthews B.B."/>
            <person name="Campbell K.S."/>
            <person name="Hradecky P."/>
            <person name="Huang Y."/>
            <person name="Kaminker J.S."/>
            <person name="Millburn G.H."/>
            <person name="Prochnik S.E."/>
            <person name="Smith C.D."/>
            <person name="Tupy J.L."/>
            <person name="Whitfield E.J."/>
            <person name="Bayraktaroglu L."/>
            <person name="Berman B.P."/>
            <person name="Bettencourt B.R."/>
            <person name="Celniker S.E."/>
            <person name="de Grey A.D.N.J."/>
            <person name="Drysdale R.A."/>
            <person name="Harris N.L."/>
            <person name="Richter J."/>
            <person name="Russo S."/>
            <person name="Schroeder A.J."/>
            <person name="Shu S.Q."/>
            <person name="Stapleton M."/>
            <person name="Yamada C."/>
            <person name="Ashburner M."/>
            <person name="Gelbart W.M."/>
            <person name="Rubin G.M."/>
            <person name="Lewis S.E."/>
        </authorList>
    </citation>
    <scope>GENOME REANNOTATION</scope>
    <source>
        <strain>Berkeley</strain>
    </source>
</reference>
<reference key="3">
    <citation type="submission" date="2008-09" db="EMBL/GenBank/DDBJ databases">
        <authorList>
            <person name="Carlson J.W."/>
            <person name="Booth B."/>
            <person name="Frise E."/>
            <person name="Park S."/>
            <person name="Wan K.H."/>
            <person name="Yu C."/>
            <person name="Celniker S.E."/>
        </authorList>
    </citation>
    <scope>NUCLEOTIDE SEQUENCE [LARGE SCALE MRNA]</scope>
    <source>
        <strain>Berkeley</strain>
        <tissue>Embryo</tissue>
    </source>
</reference>
<reference key="4">
    <citation type="journal article" date="2008" name="J. Proteome Res.">
        <title>Phosphoproteome analysis of Drosophila melanogaster embryos.</title>
        <authorList>
            <person name="Zhai B."/>
            <person name="Villen J."/>
            <person name="Beausoleil S.A."/>
            <person name="Mintseris J."/>
            <person name="Gygi S.P."/>
        </authorList>
    </citation>
    <scope>PHOSPHORYLATION [LARGE SCALE ANALYSIS] AT SER-1117</scope>
    <scope>IDENTIFICATION BY MASS SPECTROMETRY</scope>
    <source>
        <tissue>Embryo</tissue>
    </source>
</reference>
<gene>
    <name type="primary">Usp7</name>
    <name type="ORF">CG1490</name>
</gene>